<sequence>MDFLGLPTILLLVCISCLLIAAWRSTSQRGKEPPGPTPIPIIGNVFQLNPWDLMGSFKELSKKYGPIFTIHLGPKKIVVLYGYDIVKEALIDNGEAFSGRGILPLIEKLFKGTGIVTSNGETWRQLRRFALTTLRDFGMGKKGIEERIQEEAHFLVERIRKTHEEPFNPGKFLIHAVANIICSIVFGDRFDYEDKKFLDLIEMLEENNKYQNRIQTLLYNFFPTILDSLPGPHKTLIKNTETVDDFIKEIVIAHQESFDASCPRDFIDAFINKMEQEKENSYFTVESLTRTTLDLFLAGTGTTSTTLRYGLLILLKHPEIEEKMHKEIDRVVGRDRSPCMADRSQLPYTDAVIHEIQRFIDFLPLNVPHAVIKDTKLRDYFIPKDTMIFPLLSPILQDCKEFPNPEKFDPGHFLNANGTFRRSDYFMPFSAGKRICAGEGLARMEIFLFLTSILQNFSLKPVKDRKDIDISPIITSLANMPRPYEVSFIPR</sequence>
<gene>
    <name type="primary">CYP2H1</name>
</gene>
<evidence type="ECO:0000250" key="1"/>
<evidence type="ECO:0000269" key="2">
    <source>
    </source>
</evidence>
<evidence type="ECO:0000269" key="3">
    <source>
    </source>
</evidence>
<evidence type="ECO:0000305" key="4"/>
<reference key="1">
    <citation type="journal article" date="1986" name="J. Biol. Chem.">
        <title>The cDNA and protein sequence of a phenobarbital-induced chicken cytochrome P-450.</title>
        <authorList>
            <person name="Hobbs A.A."/>
            <person name="Mattschoss L.A."/>
            <person name="May B.K."/>
            <person name="Williams K.E."/>
            <person name="Elliott W.H."/>
        </authorList>
    </citation>
    <scope>NUCLEOTIDE SEQUENCE [MRNA]</scope>
    <scope>INDUCTION</scope>
</reference>
<reference key="2">
    <citation type="journal article" date="2001" name="Cell Tissue Res.">
        <title>Identification of estrogen-responsive genes in chick liver.</title>
        <authorList>
            <person name="Zhu Y."/>
            <person name="Wang M."/>
            <person name="Lin H."/>
            <person name="Li Z."/>
            <person name="Luo J."/>
        </authorList>
    </citation>
    <scope>TISSUE SPECIFICITY</scope>
    <scope>INDUCTION</scope>
</reference>
<accession>P05180</accession>
<organism>
    <name type="scientific">Gallus gallus</name>
    <name type="common">Chicken</name>
    <dbReference type="NCBI Taxonomy" id="9031"/>
    <lineage>
        <taxon>Eukaryota</taxon>
        <taxon>Metazoa</taxon>
        <taxon>Chordata</taxon>
        <taxon>Craniata</taxon>
        <taxon>Vertebrata</taxon>
        <taxon>Euteleostomi</taxon>
        <taxon>Archelosauria</taxon>
        <taxon>Archosauria</taxon>
        <taxon>Dinosauria</taxon>
        <taxon>Saurischia</taxon>
        <taxon>Theropoda</taxon>
        <taxon>Coelurosauria</taxon>
        <taxon>Aves</taxon>
        <taxon>Neognathae</taxon>
        <taxon>Galloanserae</taxon>
        <taxon>Galliformes</taxon>
        <taxon>Phasianidae</taxon>
        <taxon>Phasianinae</taxon>
        <taxon>Gallus</taxon>
    </lineage>
</organism>
<feature type="chain" id="PRO_0000051766" description="Cytochrome P450 2H1">
    <location>
        <begin position="1"/>
        <end position="491"/>
    </location>
</feature>
<feature type="binding site" description="axial binding residue">
    <location>
        <position position="436"/>
    </location>
    <ligand>
        <name>heme</name>
        <dbReference type="ChEBI" id="CHEBI:30413"/>
    </ligand>
    <ligandPart>
        <name>Fe</name>
        <dbReference type="ChEBI" id="CHEBI:18248"/>
    </ligandPart>
</feature>
<name>CP2H1_CHICK</name>
<keyword id="KW-0256">Endoplasmic reticulum</keyword>
<keyword id="KW-0349">Heme</keyword>
<keyword id="KW-0408">Iron</keyword>
<keyword id="KW-0472">Membrane</keyword>
<keyword id="KW-0479">Metal-binding</keyword>
<keyword id="KW-0492">Microsome</keyword>
<keyword id="KW-0503">Monooxygenase</keyword>
<keyword id="KW-0560">Oxidoreductase</keyword>
<keyword id="KW-1185">Reference proteome</keyword>
<comment type="function">
    <text>Cytochromes P450 are a group of heme-thiolate monooxygenases. In liver microsomes, this enzyme is involved in an NADPH-dependent electron transport pathway. It oxidizes a variety of structurally unrelated compounds, including steroids, fatty acids, and xenobiotics.</text>
</comment>
<comment type="catalytic activity">
    <reaction>
        <text>an organic molecule + reduced [NADPH--hemoprotein reductase] + O2 = an alcohol + oxidized [NADPH--hemoprotein reductase] + H2O + H(+)</text>
        <dbReference type="Rhea" id="RHEA:17149"/>
        <dbReference type="Rhea" id="RHEA-COMP:11964"/>
        <dbReference type="Rhea" id="RHEA-COMP:11965"/>
        <dbReference type="ChEBI" id="CHEBI:15377"/>
        <dbReference type="ChEBI" id="CHEBI:15378"/>
        <dbReference type="ChEBI" id="CHEBI:15379"/>
        <dbReference type="ChEBI" id="CHEBI:30879"/>
        <dbReference type="ChEBI" id="CHEBI:57618"/>
        <dbReference type="ChEBI" id="CHEBI:58210"/>
        <dbReference type="ChEBI" id="CHEBI:142491"/>
        <dbReference type="EC" id="1.14.14.1"/>
    </reaction>
</comment>
<comment type="cofactor">
    <cofactor evidence="1">
        <name>heme</name>
        <dbReference type="ChEBI" id="CHEBI:30413"/>
    </cofactor>
</comment>
<comment type="subcellular location">
    <subcellularLocation>
        <location>Endoplasmic reticulum membrane</location>
        <topology>Peripheral membrane protein</topology>
    </subcellularLocation>
    <subcellularLocation>
        <location>Microsome membrane</location>
        <topology>Peripheral membrane protein</topology>
    </subcellularLocation>
</comment>
<comment type="tissue specificity">
    <text evidence="2">Expressed in liver.</text>
</comment>
<comment type="induction">
    <text evidence="2 3">By phenobarbital (PubMed:2424910). Significantly increased expression by estrogen. Rapidly up-regulated within 0.5 hour after extrogen exposure with a peak at 1-4 hours. Expression is significantly decreased below control level after 30 hours (PubMed:11572089).</text>
</comment>
<comment type="similarity">
    <text evidence="4">Belongs to the cytochrome P450 family.</text>
</comment>
<proteinExistence type="evidence at transcript level"/>
<dbReference type="EC" id="1.14.14.1"/>
<dbReference type="EMBL" id="M13454">
    <property type="protein sequence ID" value="AAA48742.1"/>
    <property type="molecule type" value="mRNA"/>
</dbReference>
<dbReference type="PIR" id="A24814">
    <property type="entry name" value="A24814"/>
</dbReference>
<dbReference type="RefSeq" id="NP_001001616.1">
    <property type="nucleotide sequence ID" value="NM_001001616.1"/>
</dbReference>
<dbReference type="SMR" id="P05180"/>
<dbReference type="FunCoup" id="P05180">
    <property type="interactions" value="133"/>
</dbReference>
<dbReference type="STRING" id="9031.ENSGALP00000039271"/>
<dbReference type="GlyGen" id="P05180">
    <property type="glycosylation" value="1 site"/>
</dbReference>
<dbReference type="PaxDb" id="9031-ENSGALP00000039271"/>
<dbReference type="GeneID" id="414746"/>
<dbReference type="KEGG" id="gga:414746"/>
<dbReference type="CTD" id="414746"/>
<dbReference type="VEuPathDB" id="HostDB:geneid_414746"/>
<dbReference type="eggNOG" id="KOG0156">
    <property type="taxonomic scope" value="Eukaryota"/>
</dbReference>
<dbReference type="InParanoid" id="P05180"/>
<dbReference type="OrthoDB" id="9106286at2759"/>
<dbReference type="PhylomeDB" id="P05180"/>
<dbReference type="PRO" id="PR:P05180"/>
<dbReference type="Proteomes" id="UP000000539">
    <property type="component" value="Unassembled WGS sequence"/>
</dbReference>
<dbReference type="GO" id="GO:0005737">
    <property type="term" value="C:cytoplasm"/>
    <property type="evidence" value="ECO:0000318"/>
    <property type="project" value="GO_Central"/>
</dbReference>
<dbReference type="GO" id="GO:0005789">
    <property type="term" value="C:endoplasmic reticulum membrane"/>
    <property type="evidence" value="ECO:0007669"/>
    <property type="project" value="UniProtKB-SubCell"/>
</dbReference>
<dbReference type="GO" id="GO:0043231">
    <property type="term" value="C:intracellular membrane-bounded organelle"/>
    <property type="evidence" value="ECO:0000318"/>
    <property type="project" value="GO_Central"/>
</dbReference>
<dbReference type="GO" id="GO:0008392">
    <property type="term" value="F:arachidonate epoxygenase activity"/>
    <property type="evidence" value="ECO:0000318"/>
    <property type="project" value="GO_Central"/>
</dbReference>
<dbReference type="GO" id="GO:0020037">
    <property type="term" value="F:heme binding"/>
    <property type="evidence" value="ECO:0000318"/>
    <property type="project" value="GO_Central"/>
</dbReference>
<dbReference type="GO" id="GO:0005506">
    <property type="term" value="F:iron ion binding"/>
    <property type="evidence" value="ECO:0007669"/>
    <property type="project" value="InterPro"/>
</dbReference>
<dbReference type="GO" id="GO:0016712">
    <property type="term" value="F:oxidoreductase activity, acting on paired donors, with incorporation or reduction of molecular oxygen, reduced flavin or flavoprotein as one donor, and incorporation of one atom of oxygen"/>
    <property type="evidence" value="ECO:0000318"/>
    <property type="project" value="GO_Central"/>
</dbReference>
<dbReference type="GO" id="GO:0019373">
    <property type="term" value="P:epoxygenase P450 pathway"/>
    <property type="evidence" value="ECO:0000318"/>
    <property type="project" value="GO_Central"/>
</dbReference>
<dbReference type="GO" id="GO:0009410">
    <property type="term" value="P:response to xenobiotic stimulus"/>
    <property type="evidence" value="ECO:0000314"/>
    <property type="project" value="AgBase"/>
</dbReference>
<dbReference type="GO" id="GO:0006805">
    <property type="term" value="P:xenobiotic metabolic process"/>
    <property type="evidence" value="ECO:0000318"/>
    <property type="project" value="GO_Central"/>
</dbReference>
<dbReference type="CDD" id="cd20665">
    <property type="entry name" value="CYP2C-like"/>
    <property type="match status" value="1"/>
</dbReference>
<dbReference type="FunFam" id="1.10.630.10:FF:000001">
    <property type="entry name" value="Cytochrome P450, family 2"/>
    <property type="match status" value="1"/>
</dbReference>
<dbReference type="Gene3D" id="1.10.630.10">
    <property type="entry name" value="Cytochrome P450"/>
    <property type="match status" value="1"/>
</dbReference>
<dbReference type="InterPro" id="IPR001128">
    <property type="entry name" value="Cyt_P450"/>
</dbReference>
<dbReference type="InterPro" id="IPR017972">
    <property type="entry name" value="Cyt_P450_CS"/>
</dbReference>
<dbReference type="InterPro" id="IPR002401">
    <property type="entry name" value="Cyt_P450_E_grp-I"/>
</dbReference>
<dbReference type="InterPro" id="IPR036396">
    <property type="entry name" value="Cyt_P450_sf"/>
</dbReference>
<dbReference type="InterPro" id="IPR050182">
    <property type="entry name" value="Cytochrome_P450_fam2"/>
</dbReference>
<dbReference type="PANTHER" id="PTHR24300:SF356">
    <property type="entry name" value="CYTOCHROME P450 2E1"/>
    <property type="match status" value="1"/>
</dbReference>
<dbReference type="PANTHER" id="PTHR24300">
    <property type="entry name" value="CYTOCHROME P450 508A4-RELATED"/>
    <property type="match status" value="1"/>
</dbReference>
<dbReference type="Pfam" id="PF00067">
    <property type="entry name" value="p450"/>
    <property type="match status" value="1"/>
</dbReference>
<dbReference type="PRINTS" id="PR00463">
    <property type="entry name" value="EP450I"/>
</dbReference>
<dbReference type="PRINTS" id="PR00385">
    <property type="entry name" value="P450"/>
</dbReference>
<dbReference type="SUPFAM" id="SSF48264">
    <property type="entry name" value="Cytochrome P450"/>
    <property type="match status" value="1"/>
</dbReference>
<dbReference type="PROSITE" id="PS00086">
    <property type="entry name" value="CYTOCHROME_P450"/>
    <property type="match status" value="1"/>
</dbReference>
<protein>
    <recommendedName>
        <fullName>Cytochrome P450 2H1</fullName>
        <ecNumber>1.14.14.1</ecNumber>
    </recommendedName>
    <alternativeName>
        <fullName>CYPIIH1</fullName>
    </alternativeName>
    <alternativeName>
        <fullName>Cytochrome P450 PB15</fullName>
    </alternativeName>
    <alternativeName>
        <fullName>Cytochrome P450 PCHP3</fullName>
    </alternativeName>
</protein>